<name>DFB35_MOUSE</name>
<reference key="1">
    <citation type="journal article" date="2003" name="Mol. Biol. Evol.">
        <title>Signal sequence conservation and mature peptide divergence within subgroups of the murine beta-defensin gene family.</title>
        <authorList>
            <person name="Morrison G.M."/>
            <person name="Semple C.A.M."/>
            <person name="Kilanowski F.M."/>
            <person name="Hill R.E."/>
            <person name="Dorin J.R."/>
        </authorList>
    </citation>
    <scope>NUCLEOTIDE SEQUENCE [MRNA]</scope>
    <scope>TISSUE SPECIFICITY</scope>
    <source>
        <strain>C57BL/6N</strain>
        <tissue>Testis</tissue>
    </source>
</reference>
<reference key="2">
    <citation type="journal article" date="2004" name="J. Biol. Chem.">
        <title>Identification on mouse chromosome 8 of new beta-defensin genes with regionally specific expression in the male reproductive organ.</title>
        <authorList>
            <person name="Zaballos A."/>
            <person name="Villares R."/>
            <person name="Albar J.P."/>
            <person name="Martinez-A C."/>
            <person name="Marquez G."/>
        </authorList>
    </citation>
    <scope>TISSUE SPECIFICITY</scope>
    <source>
        <strain>BALB/cJ</strain>
        <tissue>Epididymis</tissue>
    </source>
</reference>
<organism>
    <name type="scientific">Mus musculus</name>
    <name type="common">Mouse</name>
    <dbReference type="NCBI Taxonomy" id="10090"/>
    <lineage>
        <taxon>Eukaryota</taxon>
        <taxon>Metazoa</taxon>
        <taxon>Chordata</taxon>
        <taxon>Craniata</taxon>
        <taxon>Vertebrata</taxon>
        <taxon>Euteleostomi</taxon>
        <taxon>Mammalia</taxon>
        <taxon>Eutheria</taxon>
        <taxon>Euarchontoglires</taxon>
        <taxon>Glires</taxon>
        <taxon>Rodentia</taxon>
        <taxon>Myomorpha</taxon>
        <taxon>Muroidea</taxon>
        <taxon>Muridae</taxon>
        <taxon>Murinae</taxon>
        <taxon>Mus</taxon>
        <taxon>Mus</taxon>
    </lineage>
</organism>
<sequence length="63" mass="7397">MPQTFFVFCFLFFVFLQLFPGTGEIAVCETCRLGRGKCRRACIESEKIVGWCKLNFFCCRERI</sequence>
<proteinExistence type="evidence at transcript level"/>
<keyword id="KW-0044">Antibiotic</keyword>
<keyword id="KW-0929">Antimicrobial</keyword>
<keyword id="KW-0211">Defensin</keyword>
<keyword id="KW-1015">Disulfide bond</keyword>
<keyword id="KW-1185">Reference proteome</keyword>
<keyword id="KW-0964">Secreted</keyword>
<keyword id="KW-0732">Signal</keyword>
<protein>
    <recommendedName>
        <fullName>Beta-defensin 35</fullName>
        <shortName>BD-35</shortName>
        <shortName>mBD-35</shortName>
    </recommendedName>
    <alternativeName>
        <fullName>Defensin, beta 35</fullName>
    </alternativeName>
</protein>
<comment type="function">
    <text evidence="1">Has antibacterial activity.</text>
</comment>
<comment type="subcellular location">
    <subcellularLocation>
        <location evidence="1">Secreted</location>
    </subcellularLocation>
</comment>
<comment type="tissue specificity">
    <text evidence="3 4">Expressed in testis, epididymis (caput, corpus and cauda), kidney and neonatal and adult brain.</text>
</comment>
<comment type="similarity">
    <text evidence="5">Belongs to the beta-defensin family.</text>
</comment>
<feature type="signal peptide" evidence="2">
    <location>
        <begin position="1"/>
        <end position="23"/>
    </location>
</feature>
<feature type="chain" id="PRO_0000006947" description="Beta-defensin 35">
    <location>
        <begin position="24"/>
        <end position="63"/>
    </location>
</feature>
<feature type="disulfide bond" evidence="1">
    <location>
        <begin position="31"/>
        <end position="58"/>
    </location>
</feature>
<feature type="disulfide bond" evidence="1">
    <location>
        <begin position="38"/>
        <end position="52"/>
    </location>
</feature>
<feature type="disulfide bond" evidence="1">
    <location>
        <begin position="42"/>
        <end position="59"/>
    </location>
</feature>
<dbReference type="EMBL" id="AJ437650">
    <property type="protein sequence ID" value="CAD26899.1"/>
    <property type="molecule type" value="mRNA"/>
</dbReference>
<dbReference type="CCDS" id="CCDS52516.1"/>
<dbReference type="RefSeq" id="NP_631970.1">
    <property type="nucleotide sequence ID" value="NM_139224.1"/>
</dbReference>
<dbReference type="SMR" id="Q8R2I3"/>
<dbReference type="STRING" id="10090.ENSMUSP00000076067"/>
<dbReference type="PaxDb" id="10090-ENSMUSP00000076067"/>
<dbReference type="DNASU" id="246084"/>
<dbReference type="Ensembl" id="ENSMUST00000076786.3">
    <property type="protein sequence ID" value="ENSMUSP00000076067.3"/>
    <property type="gene ID" value="ENSMUSG00000058052.3"/>
</dbReference>
<dbReference type="GeneID" id="246084"/>
<dbReference type="KEGG" id="mmu:246084"/>
<dbReference type="UCSC" id="uc009lcf.1">
    <property type="organism name" value="mouse"/>
</dbReference>
<dbReference type="AGR" id="MGI:2179204"/>
<dbReference type="CTD" id="246084"/>
<dbReference type="MGI" id="MGI:2179204">
    <property type="gene designation" value="Defb35"/>
</dbReference>
<dbReference type="VEuPathDB" id="HostDB:ENSMUSG00000058052"/>
<dbReference type="GeneTree" id="ENSGT00390000002317"/>
<dbReference type="HOGENOM" id="CLU_197691_0_0_1"/>
<dbReference type="InParanoid" id="Q8R2I3"/>
<dbReference type="OMA" id="CRRMCLE"/>
<dbReference type="OrthoDB" id="9511204at2759"/>
<dbReference type="PhylomeDB" id="Q8R2I3"/>
<dbReference type="BioGRID-ORCS" id="246084">
    <property type="hits" value="2 hits in 44 CRISPR screens"/>
</dbReference>
<dbReference type="PRO" id="PR:Q8R2I3"/>
<dbReference type="Proteomes" id="UP000000589">
    <property type="component" value="Chromosome 8"/>
</dbReference>
<dbReference type="RNAct" id="Q8R2I3">
    <property type="molecule type" value="protein"/>
</dbReference>
<dbReference type="Bgee" id="ENSMUSG00000058052">
    <property type="expression patterns" value="Expressed in submandibular gland and 17 other cell types or tissues"/>
</dbReference>
<dbReference type="GO" id="GO:0005576">
    <property type="term" value="C:extracellular region"/>
    <property type="evidence" value="ECO:0007669"/>
    <property type="project" value="UniProtKB-SubCell"/>
</dbReference>
<dbReference type="GO" id="GO:0042742">
    <property type="term" value="P:defense response to bacterium"/>
    <property type="evidence" value="ECO:0007669"/>
    <property type="project" value="UniProtKB-KW"/>
</dbReference>
<dbReference type="GO" id="GO:0045087">
    <property type="term" value="P:innate immune response"/>
    <property type="evidence" value="ECO:0007669"/>
    <property type="project" value="InterPro"/>
</dbReference>
<dbReference type="InterPro" id="IPR025933">
    <property type="entry name" value="Beta_defensin_dom"/>
</dbReference>
<dbReference type="Pfam" id="PF13841">
    <property type="entry name" value="Defensin_beta_2"/>
    <property type="match status" value="1"/>
</dbReference>
<evidence type="ECO:0000250" key="1"/>
<evidence type="ECO:0000255" key="2"/>
<evidence type="ECO:0000269" key="3">
    <source>
    </source>
</evidence>
<evidence type="ECO:0000269" key="4">
    <source>
    </source>
</evidence>
<evidence type="ECO:0000305" key="5"/>
<accession>Q8R2I3</accession>
<gene>
    <name type="primary">Defb35</name>
</gene>